<gene>
    <name evidence="1" type="primary">ureG2</name>
    <name type="ordered locus">Mext_1302</name>
</gene>
<keyword id="KW-0143">Chaperone</keyword>
<keyword id="KW-0963">Cytoplasm</keyword>
<keyword id="KW-0342">GTP-binding</keyword>
<keyword id="KW-0996">Nickel insertion</keyword>
<keyword id="KW-0547">Nucleotide-binding</keyword>
<protein>
    <recommendedName>
        <fullName evidence="1">Urease accessory protein UreG 2</fullName>
    </recommendedName>
</protein>
<organism>
    <name type="scientific">Methylorubrum extorquens (strain PA1)</name>
    <name type="common">Methylobacterium extorquens</name>
    <dbReference type="NCBI Taxonomy" id="419610"/>
    <lineage>
        <taxon>Bacteria</taxon>
        <taxon>Pseudomonadati</taxon>
        <taxon>Pseudomonadota</taxon>
        <taxon>Alphaproteobacteria</taxon>
        <taxon>Hyphomicrobiales</taxon>
        <taxon>Methylobacteriaceae</taxon>
        <taxon>Methylorubrum</taxon>
    </lineage>
</organism>
<proteinExistence type="inferred from homology"/>
<name>UREG2_METEP</name>
<accession>A9W297</accession>
<comment type="function">
    <text evidence="1">Facilitates the functional incorporation of the urease nickel metallocenter. This process requires GTP hydrolysis, probably effectuated by UreG.</text>
</comment>
<comment type="subunit">
    <text evidence="1">Homodimer. UreD, UreF and UreG form a complex that acts as a GTP-hydrolysis-dependent molecular chaperone, activating the urease apoprotein by helping to assemble the nickel containing metallocenter of UreC. The UreE protein probably delivers the nickel.</text>
</comment>
<comment type="subcellular location">
    <subcellularLocation>
        <location evidence="1">Cytoplasm</location>
    </subcellularLocation>
</comment>
<comment type="similarity">
    <text evidence="1">Belongs to the SIMIBI class G3E GTPase family. UreG subfamily.</text>
</comment>
<reference key="1">
    <citation type="submission" date="2007-12" db="EMBL/GenBank/DDBJ databases">
        <title>Complete sequence of Methylobacterium extorquens PA1.</title>
        <authorList>
            <consortium name="US DOE Joint Genome Institute"/>
            <person name="Copeland A."/>
            <person name="Lucas S."/>
            <person name="Lapidus A."/>
            <person name="Barry K."/>
            <person name="Glavina del Rio T."/>
            <person name="Dalin E."/>
            <person name="Tice H."/>
            <person name="Pitluck S."/>
            <person name="Saunders E."/>
            <person name="Brettin T."/>
            <person name="Bruce D."/>
            <person name="Detter J.C."/>
            <person name="Han C."/>
            <person name="Schmutz J."/>
            <person name="Larimer F."/>
            <person name="Land M."/>
            <person name="Hauser L."/>
            <person name="Kyrpides N."/>
            <person name="Kim E."/>
            <person name="Marx C."/>
            <person name="Richardson P."/>
        </authorList>
    </citation>
    <scope>NUCLEOTIDE SEQUENCE [LARGE SCALE GENOMIC DNA]</scope>
    <source>
        <strain>PA1</strain>
    </source>
</reference>
<feature type="chain" id="PRO_0000347403" description="Urease accessory protein UreG 2">
    <location>
        <begin position="1"/>
        <end position="215"/>
    </location>
</feature>
<feature type="binding site" evidence="1">
    <location>
        <begin position="11"/>
        <end position="18"/>
    </location>
    <ligand>
        <name>GTP</name>
        <dbReference type="ChEBI" id="CHEBI:37565"/>
    </ligand>
</feature>
<dbReference type="EMBL" id="CP000908">
    <property type="protein sequence ID" value="ABY29703.1"/>
    <property type="molecule type" value="Genomic_DNA"/>
</dbReference>
<dbReference type="SMR" id="A9W297"/>
<dbReference type="KEGG" id="mex:Mext_1302"/>
<dbReference type="eggNOG" id="COG0378">
    <property type="taxonomic scope" value="Bacteria"/>
</dbReference>
<dbReference type="HOGENOM" id="CLU_072144_1_0_5"/>
<dbReference type="BioCyc" id="MEXT419610:MEXT_RS06560-MONOMER"/>
<dbReference type="GO" id="GO:0005737">
    <property type="term" value="C:cytoplasm"/>
    <property type="evidence" value="ECO:0007669"/>
    <property type="project" value="UniProtKB-SubCell"/>
</dbReference>
<dbReference type="GO" id="GO:0005525">
    <property type="term" value="F:GTP binding"/>
    <property type="evidence" value="ECO:0007669"/>
    <property type="project" value="UniProtKB-KW"/>
</dbReference>
<dbReference type="GO" id="GO:0003924">
    <property type="term" value="F:GTPase activity"/>
    <property type="evidence" value="ECO:0007669"/>
    <property type="project" value="InterPro"/>
</dbReference>
<dbReference type="GO" id="GO:0016151">
    <property type="term" value="F:nickel cation binding"/>
    <property type="evidence" value="ECO:0007669"/>
    <property type="project" value="UniProtKB-UniRule"/>
</dbReference>
<dbReference type="GO" id="GO:0043419">
    <property type="term" value="P:urea catabolic process"/>
    <property type="evidence" value="ECO:0007669"/>
    <property type="project" value="InterPro"/>
</dbReference>
<dbReference type="Gene3D" id="3.40.50.300">
    <property type="entry name" value="P-loop containing nucleotide triphosphate hydrolases"/>
    <property type="match status" value="1"/>
</dbReference>
<dbReference type="HAMAP" id="MF_01389">
    <property type="entry name" value="UreG"/>
    <property type="match status" value="1"/>
</dbReference>
<dbReference type="InterPro" id="IPR003495">
    <property type="entry name" value="CobW/HypB/UreG_nucleotide-bd"/>
</dbReference>
<dbReference type="InterPro" id="IPR027417">
    <property type="entry name" value="P-loop_NTPase"/>
</dbReference>
<dbReference type="InterPro" id="IPR004400">
    <property type="entry name" value="UreG"/>
</dbReference>
<dbReference type="NCBIfam" id="TIGR00101">
    <property type="entry name" value="ureG"/>
    <property type="match status" value="1"/>
</dbReference>
<dbReference type="PANTHER" id="PTHR31715">
    <property type="entry name" value="UREASE ACCESSORY PROTEIN G"/>
    <property type="match status" value="1"/>
</dbReference>
<dbReference type="PANTHER" id="PTHR31715:SF0">
    <property type="entry name" value="UREASE ACCESSORY PROTEIN G"/>
    <property type="match status" value="1"/>
</dbReference>
<dbReference type="Pfam" id="PF02492">
    <property type="entry name" value="cobW"/>
    <property type="match status" value="1"/>
</dbReference>
<dbReference type="PIRSF" id="PIRSF005624">
    <property type="entry name" value="Ni-bind_GTPase"/>
    <property type="match status" value="1"/>
</dbReference>
<dbReference type="SUPFAM" id="SSF52540">
    <property type="entry name" value="P-loop containing nucleoside triphosphate hydrolases"/>
    <property type="match status" value="1"/>
</dbReference>
<evidence type="ECO:0000255" key="1">
    <source>
        <dbReference type="HAMAP-Rule" id="MF_01389"/>
    </source>
</evidence>
<sequence length="215" mass="23072">MKKITRIGIGGPVGSGKTAVIETITPRLIALGIKPLIITNDVVTTEDAKQVRRTLHGVLIEEKIVGVETGACPHTAVREDPSMNIAAVEELEDKYPDSDVILIESGGDNLTLTFSPALADFYIYVIDVAAGDKIPRKNGAGVCQSDILVINKKDLAPYVGASLEVMARDSKLMRGKKPFLFTNCKTGEGVDDLLQLILDMALFDVRTRPPLAASA</sequence>